<keyword id="KW-0010">Activator</keyword>
<keyword id="KW-0175">Coiled coil</keyword>
<keyword id="KW-0539">Nucleus</keyword>
<keyword id="KW-1185">Reference proteome</keyword>
<keyword id="KW-0804">Transcription</keyword>
<keyword id="KW-0805">Transcription regulation</keyword>
<sequence length="2731" mass="317067">MMNPQQILQQQQQMIQQQQQQLHQQQMQQQQMQQQQQHHMQQQQPMQHMQQPHHMIHQQQPIIIQQHLHHQIHPHIQQQQQQQQQQQQQQQQQQQQQQQQQQQQQQVHPSHLQQQVHHPQLHMQQHIPQHMQQHHIMQQHQQIHQMQMQQQQQQQQQQQQQQQQQQQQQQQQQQQQQQQQQQQHQQQQQPIQQQHIVQQQPIQQQPIQQHIVQQPIQQQIQQQPQIQQQQIPQPQIQIPSQIQQPLQQQQIQQQQIPLPQQVPLAQTQQQQTAPIQQLQQQQQLQQQQQQQQQQQQQQQQQQQQPQQVQQPQQQQQQQQPVARRPIQNPSYHSQSQIGHPMRGGGLKKYEIQKPADKKELGPDLGVPDFYPLDDKSKEDTLPQEFILGGFCERYQHDECKSSSSIFKNFDFPKVKEQLLQSIYQVEWKKSSTQKSGQPPVMNKSGNKRPVPEQKAWSANHRESWVLKLAGNEPLQKLASSVPHGYKGETLLKMFLDNQVPLIRATWYTKIVYGNMPKHKTVEPSNDWTKTIVQSLFALIRNTTGENNSSGSSSSNNVLGGNSGSGVVKKATSSYTGILYIERLIKWNFSEGLLNKDILLSMLIDHLNETDRPEEAVLISSLLLYYSDTLILSTYHSMKFLNKAYEKLMKITISSAAAVSAASSSSSSSSTQSNITALSNPKLQQLGHGHGHGHGHHSHSHSHNQQQPQLNITSTQTIPSINSIASSLSPSNQKIYSILCIISKQISMNLPDTFMSFKFFRELVSLIWPSNLIDRIEYNQLSFVNNLRFTVSPEYKWINKYYSEINKNQQTQLKQLRQQQNNNIGFKNNKNNNSIINKQNNITNNNNNNNNNSRGGINYSNLIKSLDRFYTTFDLKLLYHEIFGNGNQVSLEDDKEKILLVCEWACTSCRNYPFSFLSATSILKIFERNLTIKLNNIVLNHPLQNILVHFLETFKPKNIELKRICQLFSELIRNEIFSQNSYARYLISRGILENSNININGNHNGDKNNNINGRLENNKYHKYYLKEFPIFNRNDFPSYDIHQQRNQRRTILFPNTIKSQEEINSMEQARISVKSFILNSANSNNENDNNSDMMVDGGGGGGGGDKQNIGLIQLSQIIQSLSFYSQISLTEWLSLCLRLNFNNPSNDDNNNNNNNNNNHHQLSDYSMKGFRHFSFPITQFYIERVFIIMESVSNYHSILQCLLVLWDNWNNIKELQSFVFYTTKRLQQAFIVSDQFISLLDIIYKKVINLSRNNNNNNKNKNNNKQSNNIKKEGTNGEEQESDDDDDDDEDDDDDDNDENDKVNDNDNEEDDEEDDEDEDEDEDDQMDETKDSIKQQQQQKSNENYIESYLYDILNKFKSIKSVQIWIKRNNVQCKLKKELSNDKNMIDKSELKNSCDFMIDQVLSIKNQLKQEQEQQNCEIINNIIKRFDEELISNNLINSLMNQFKTKVSNILLGCENGGSGGGGGGGNLSDQDICEEFMKSLISKTIDDNKNNDNNNNNENENNNIISKTIIIIKQQMVLSRLLCLFSIVYPISMNGKQLFLRLFKDQLSIILKTFINSNDSMEIQEKYFFKVILLLVTLILNQYIDLYSIMVYSILPLLQSNEIESDEDCKVWFLIKIIQVLLCDGKLIQFVYKDIFIDNNNNNHQSNQGGGGDSGNNNLTNLKTIINHQVISLNLTNKSKISSLSEIFQTICKLYHQYHEKIKDTIDDDNNNNNSKNELSTSIFQGICTILTDPDSRYIFLNSSQIDKIKQLGLGPIETRYLFHLILGNLKNDHDDNNENNNNNNNNNNNNNNNNNNNNNNNNNNNNNNNNNNNNNNNNNGFNFKINNSRIIIQYEQLKLENCITYSFKVINSTLTNSSNCYWNIHLSYIGLKLLLDEWKTLPPIISTQSSTTSPLTKSPSQSPTLQSQDLNSTNSTSPTSKQSQQQQQQQQQKSTTPTLTPATTTTTTTNNTTTFTPESIITQFILLHFEENRGWERVFIYEDLFLLFPLEVRNELIKISTIILESQYKETSFIQPSTDLPLIKHIQQNLPISQLLKQQPQQYQLILNRESSGTNKAVLINDDNLDNILFQESFTDIIINILSTYEDSNPISNSFILSLFKQLSMFNQFSKGGVLDTINLDSTLSEIVIQSVVIRITFLITQIKNCKLIVKQSTQKLEEISVTLLNLLSKFIIQSDGEFNLFDPILTIFDLILSDKFGNDNILNYSSSSSSTTTTSTTSTPVTSSPSTTTTATTNQQQQQQQQQQADQKNNVKKKLHELYQKIKSSFPTSLQLKLEKQLSFLSTNPTSLPFTIIHPPTLVNTSSVSSTNTSIQSTTSPIIAPVTPPSNFNLQQQTSQQQQQQQQQQQQQSQQHQQQQQTPQQQQQSQQQQQQQQQQTATTASTASQIPPQAVSSILDIKPTYTQMDPWTLLEDYSETPLSPSIYGGVKMERKELTYIKSSFPSKNMALVNEPVDQKLLAQRKSQVQEIEKQQQQQQIKSQPSTPLTSLPPQQHQQLQPPPPQLQQQLNQQQQRQQPPQQLQQQKPQTQQQQQQQQQQQQQQQQQQQQQQTQKQPQQPQQPQQSQQFQQYQQFEQQQQALQFHLNQQKMQQLQPQQLNQQQLNQQQLNQQLNQQQQLNQQQFQLHQQQQQQLKQQQLQQQQLQQQIQQQQQQQQLQQLIQPQQFQQQNLKRNFNNLSQPPLPQQQQQQQIHLQQQQIPQQHQQIPQQQQHQQHQQQKCSTTKYNNYK</sequence>
<organism>
    <name type="scientific">Dictyostelium discoideum</name>
    <name type="common">Social amoeba</name>
    <dbReference type="NCBI Taxonomy" id="44689"/>
    <lineage>
        <taxon>Eukaryota</taxon>
        <taxon>Amoebozoa</taxon>
        <taxon>Evosea</taxon>
        <taxon>Eumycetozoa</taxon>
        <taxon>Dictyostelia</taxon>
        <taxon>Dictyosteliales</taxon>
        <taxon>Dictyosteliaceae</taxon>
        <taxon>Dictyostelium</taxon>
    </lineage>
</organism>
<feature type="chain" id="PRO_0000388652" description="Putative mediator of RNA polymerase II transcription subunit 12">
    <location>
        <begin position="1"/>
        <end position="2731"/>
    </location>
</feature>
<feature type="region of interest" description="Disordered" evidence="3">
    <location>
        <begin position="29"/>
        <end position="57"/>
    </location>
</feature>
<feature type="region of interest" description="Disordered" evidence="3">
    <location>
        <begin position="101"/>
        <end position="145"/>
    </location>
</feature>
<feature type="region of interest" description="Disordered" evidence="3">
    <location>
        <begin position="310"/>
        <end position="376"/>
    </location>
</feature>
<feature type="region of interest" description="Disordered" evidence="3">
    <location>
        <begin position="432"/>
        <end position="451"/>
    </location>
</feature>
<feature type="region of interest" description="Disordered" evidence="3">
    <location>
        <begin position="685"/>
        <end position="708"/>
    </location>
</feature>
<feature type="region of interest" description="Disordered" evidence="3">
    <location>
        <begin position="1251"/>
        <end position="1341"/>
    </location>
</feature>
<feature type="region of interest" description="Disordered" evidence="3">
    <location>
        <begin position="1778"/>
        <end position="1825"/>
    </location>
</feature>
<feature type="region of interest" description="Disordered" evidence="3">
    <location>
        <begin position="1892"/>
        <end position="1958"/>
    </location>
</feature>
<feature type="region of interest" description="Disordered" evidence="3">
    <location>
        <begin position="2212"/>
        <end position="2258"/>
    </location>
</feature>
<feature type="region of interest" description="Disordered" evidence="3">
    <location>
        <begin position="2307"/>
        <end position="2351"/>
    </location>
</feature>
<feature type="region of interest" description="Disordered" evidence="3">
    <location>
        <begin position="2472"/>
        <end position="2532"/>
    </location>
</feature>
<feature type="region of interest" description="Disordered" evidence="3">
    <location>
        <begin position="2705"/>
        <end position="2731"/>
    </location>
</feature>
<feature type="coiled-coil region" evidence="2">
    <location>
        <begin position="5"/>
        <end position="37"/>
    </location>
</feature>
<feature type="coiled-coil region" evidence="2">
    <location>
        <begin position="75"/>
        <end position="108"/>
    </location>
</feature>
<feature type="coiled-coil region" evidence="2">
    <location>
        <begin position="141"/>
        <end position="189"/>
    </location>
</feature>
<feature type="coiled-coil region" evidence="2">
    <location>
        <begin position="275"/>
        <end position="304"/>
    </location>
</feature>
<feature type="coiled-coil region" evidence="2">
    <location>
        <begin position="1316"/>
        <end position="1344"/>
    </location>
</feature>
<feature type="coiled-coil region" evidence="2">
    <location>
        <begin position="1375"/>
        <end position="1433"/>
    </location>
</feature>
<feature type="coiled-coil region" evidence="2">
    <location>
        <begin position="2239"/>
        <end position="2270"/>
    </location>
</feature>
<feature type="coiled-coil region" evidence="2">
    <location>
        <begin position="2336"/>
        <end position="2363"/>
    </location>
</feature>
<feature type="coiled-coil region" evidence="2">
    <location>
        <begin position="2523"/>
        <end position="2662"/>
    </location>
</feature>
<feature type="compositionally biased region" description="Low complexity" evidence="3">
    <location>
        <begin position="310"/>
        <end position="320"/>
    </location>
</feature>
<feature type="compositionally biased region" description="Polar residues" evidence="3">
    <location>
        <begin position="327"/>
        <end position="337"/>
    </location>
</feature>
<feature type="compositionally biased region" description="Basic and acidic residues" evidence="3">
    <location>
        <begin position="347"/>
        <end position="361"/>
    </location>
</feature>
<feature type="compositionally biased region" description="Basic residues" evidence="3">
    <location>
        <begin position="688"/>
        <end position="701"/>
    </location>
</feature>
<feature type="compositionally biased region" description="Low complexity" evidence="3">
    <location>
        <begin position="1251"/>
        <end position="1268"/>
    </location>
</feature>
<feature type="compositionally biased region" description="Acidic residues" evidence="3">
    <location>
        <begin position="1275"/>
        <end position="1298"/>
    </location>
</feature>
<feature type="compositionally biased region" description="Acidic residues" evidence="3">
    <location>
        <begin position="1305"/>
        <end position="1326"/>
    </location>
</feature>
<feature type="compositionally biased region" description="Low complexity" evidence="3">
    <location>
        <begin position="1783"/>
        <end position="1824"/>
    </location>
</feature>
<feature type="compositionally biased region" description="Low complexity" evidence="3">
    <location>
        <begin position="1892"/>
        <end position="1909"/>
    </location>
</feature>
<feature type="compositionally biased region" description="Low complexity" evidence="3">
    <location>
        <begin position="1916"/>
        <end position="1958"/>
    </location>
</feature>
<feature type="compositionally biased region" description="Low complexity" evidence="3">
    <location>
        <begin position="2212"/>
        <end position="2250"/>
    </location>
</feature>
<feature type="compositionally biased region" description="Low complexity" evidence="3">
    <location>
        <begin position="2307"/>
        <end position="2322"/>
    </location>
</feature>
<feature type="compositionally biased region" description="Low complexity" evidence="3">
    <location>
        <begin position="2337"/>
        <end position="2351"/>
    </location>
</feature>
<feature type="compositionally biased region" description="Low complexity" evidence="3">
    <location>
        <begin position="2472"/>
        <end position="2501"/>
    </location>
</feature>
<feature type="compositionally biased region" description="Low complexity" evidence="3">
    <location>
        <begin position="2508"/>
        <end position="2532"/>
    </location>
</feature>
<feature type="compositionally biased region" description="Low complexity" evidence="3">
    <location>
        <begin position="2705"/>
        <end position="2720"/>
    </location>
</feature>
<feature type="compositionally biased region" description="Polar residues" evidence="3">
    <location>
        <begin position="2721"/>
        <end position="2731"/>
    </location>
</feature>
<accession>Q54U49</accession>
<name>MED12_DICDI</name>
<protein>
    <recommendedName>
        <fullName>Putative mediator of RNA polymerase II transcription subunit 12</fullName>
    </recommendedName>
    <alternativeName>
        <fullName>Putative mediator complex subunit 12</fullName>
    </alternativeName>
</protein>
<dbReference type="EMBL" id="AAFI02000040">
    <property type="protein sequence ID" value="EAL66935.2"/>
    <property type="molecule type" value="Genomic_DNA"/>
</dbReference>
<dbReference type="RefSeq" id="XP_640927.2">
    <property type="nucleotide sequence ID" value="XM_635835.2"/>
</dbReference>
<dbReference type="FunCoup" id="Q54U49">
    <property type="interactions" value="489"/>
</dbReference>
<dbReference type="STRING" id="44689.Q54U49"/>
<dbReference type="GlyGen" id="Q54U49">
    <property type="glycosylation" value="1 site"/>
</dbReference>
<dbReference type="PaxDb" id="44689-DDB0266871"/>
<dbReference type="EnsemblProtists" id="EAL66935">
    <property type="protein sequence ID" value="EAL66935"/>
    <property type="gene ID" value="DDB_G0281277"/>
</dbReference>
<dbReference type="GeneID" id="8622990"/>
<dbReference type="KEGG" id="ddi:DDB_G0281277"/>
<dbReference type="dictyBase" id="DDB_G0281277">
    <property type="gene designation" value="med12"/>
</dbReference>
<dbReference type="VEuPathDB" id="AmoebaDB:DDB_G0281277"/>
<dbReference type="eggNOG" id="KOG3598">
    <property type="taxonomic scope" value="Eukaryota"/>
</dbReference>
<dbReference type="HOGENOM" id="CLU_227164_0_0_1"/>
<dbReference type="InParanoid" id="Q54U49"/>
<dbReference type="OMA" id="CEWACTS"/>
<dbReference type="PRO" id="PR:Q54U49"/>
<dbReference type="Proteomes" id="UP000002195">
    <property type="component" value="Chromosome 3"/>
</dbReference>
<dbReference type="GO" id="GO:0016592">
    <property type="term" value="C:mediator complex"/>
    <property type="evidence" value="ECO:0000250"/>
    <property type="project" value="dictyBase"/>
</dbReference>
<dbReference type="GO" id="GO:0003712">
    <property type="term" value="F:transcription coregulator activity"/>
    <property type="evidence" value="ECO:0007669"/>
    <property type="project" value="InterPro"/>
</dbReference>
<dbReference type="GO" id="GO:0006357">
    <property type="term" value="P:regulation of transcription by RNA polymerase II"/>
    <property type="evidence" value="ECO:0007669"/>
    <property type="project" value="InterPro"/>
</dbReference>
<dbReference type="Gene3D" id="3.30.70.2850">
    <property type="match status" value="1"/>
</dbReference>
<dbReference type="InterPro" id="IPR019035">
    <property type="entry name" value="Mediator_Med12"/>
</dbReference>
<dbReference type="PANTHER" id="PTHR46567">
    <property type="entry name" value="MEDIATOR OF RNA POLYMERASE II TRANSCRIPTION SUBUNIT 12"/>
    <property type="match status" value="1"/>
</dbReference>
<dbReference type="PANTHER" id="PTHR46567:SF1">
    <property type="entry name" value="MEDIATOR OF RNA POLYMERASE II TRANSCRIPTION SUBUNIT 12"/>
    <property type="match status" value="1"/>
</dbReference>
<dbReference type="Pfam" id="PF09497">
    <property type="entry name" value="Med12"/>
    <property type="match status" value="1"/>
</dbReference>
<dbReference type="SMART" id="SM01281">
    <property type="entry name" value="Med12"/>
    <property type="match status" value="1"/>
</dbReference>
<evidence type="ECO:0000250" key="1"/>
<evidence type="ECO:0000255" key="2"/>
<evidence type="ECO:0000256" key="3">
    <source>
        <dbReference type="SAM" id="MobiDB-lite"/>
    </source>
</evidence>
<evidence type="ECO:0000305" key="4"/>
<reference key="1">
    <citation type="journal article" date="2005" name="Nature">
        <title>The genome of the social amoeba Dictyostelium discoideum.</title>
        <authorList>
            <person name="Eichinger L."/>
            <person name="Pachebat J.A."/>
            <person name="Gloeckner G."/>
            <person name="Rajandream M.A."/>
            <person name="Sucgang R."/>
            <person name="Berriman M."/>
            <person name="Song J."/>
            <person name="Olsen R."/>
            <person name="Szafranski K."/>
            <person name="Xu Q."/>
            <person name="Tunggal B."/>
            <person name="Kummerfeld S."/>
            <person name="Madera M."/>
            <person name="Konfortov B.A."/>
            <person name="Rivero F."/>
            <person name="Bankier A.T."/>
            <person name="Lehmann R."/>
            <person name="Hamlin N."/>
            <person name="Davies R."/>
            <person name="Gaudet P."/>
            <person name="Fey P."/>
            <person name="Pilcher K."/>
            <person name="Chen G."/>
            <person name="Saunders D."/>
            <person name="Sodergren E.J."/>
            <person name="Davis P."/>
            <person name="Kerhornou A."/>
            <person name="Nie X."/>
            <person name="Hall N."/>
            <person name="Anjard C."/>
            <person name="Hemphill L."/>
            <person name="Bason N."/>
            <person name="Farbrother P."/>
            <person name="Desany B."/>
            <person name="Just E."/>
            <person name="Morio T."/>
            <person name="Rost R."/>
            <person name="Churcher C.M."/>
            <person name="Cooper J."/>
            <person name="Haydock S."/>
            <person name="van Driessche N."/>
            <person name="Cronin A."/>
            <person name="Goodhead I."/>
            <person name="Muzny D.M."/>
            <person name="Mourier T."/>
            <person name="Pain A."/>
            <person name="Lu M."/>
            <person name="Harper D."/>
            <person name="Lindsay R."/>
            <person name="Hauser H."/>
            <person name="James K.D."/>
            <person name="Quiles M."/>
            <person name="Madan Babu M."/>
            <person name="Saito T."/>
            <person name="Buchrieser C."/>
            <person name="Wardroper A."/>
            <person name="Felder M."/>
            <person name="Thangavelu M."/>
            <person name="Johnson D."/>
            <person name="Knights A."/>
            <person name="Loulseged H."/>
            <person name="Mungall K.L."/>
            <person name="Oliver K."/>
            <person name="Price C."/>
            <person name="Quail M.A."/>
            <person name="Urushihara H."/>
            <person name="Hernandez J."/>
            <person name="Rabbinowitsch E."/>
            <person name="Steffen D."/>
            <person name="Sanders M."/>
            <person name="Ma J."/>
            <person name="Kohara Y."/>
            <person name="Sharp S."/>
            <person name="Simmonds M.N."/>
            <person name="Spiegler S."/>
            <person name="Tivey A."/>
            <person name="Sugano S."/>
            <person name="White B."/>
            <person name="Walker D."/>
            <person name="Woodward J.R."/>
            <person name="Winckler T."/>
            <person name="Tanaka Y."/>
            <person name="Shaulsky G."/>
            <person name="Schleicher M."/>
            <person name="Weinstock G.M."/>
            <person name="Rosenthal A."/>
            <person name="Cox E.C."/>
            <person name="Chisholm R.L."/>
            <person name="Gibbs R.A."/>
            <person name="Loomis W.F."/>
            <person name="Platzer M."/>
            <person name="Kay R.R."/>
            <person name="Williams J.G."/>
            <person name="Dear P.H."/>
            <person name="Noegel A.A."/>
            <person name="Barrell B.G."/>
            <person name="Kuspa A."/>
        </authorList>
    </citation>
    <scope>NUCLEOTIDE SEQUENCE [LARGE SCALE GENOMIC DNA]</scope>
    <source>
        <strain>AX4</strain>
    </source>
</reference>
<reference key="2">
    <citation type="journal article" date="2008" name="Nucleic Acids Res.">
        <title>Comparative genomics supports a deep evolutionary origin for the large, four-module transcriptional mediator complex.</title>
        <authorList>
            <person name="Bourbon H.-M."/>
        </authorList>
    </citation>
    <scope>NOMENCLATURE</scope>
</reference>
<comment type="function">
    <text evidence="1">Component of the Mediator complex, a coactivator involved in the regulated transcription of nearly all RNA polymerase II-dependent genes. Mediator functions as a bridge to convey information from gene-specific regulatory proteins to the basal RNA polymerase II transcription machinery. Mediator is recruited to promoters by direct interactions with regulatory proteins and serves as a scaffold for the assembly of a functional preinitiation complex with RNA polymerase II and the general transcription factors (By similarity).</text>
</comment>
<comment type="subunit">
    <text evidence="1">Component of the Mediator complex.</text>
</comment>
<comment type="subcellular location">
    <subcellularLocation>
        <location evidence="1">Nucleus</location>
    </subcellularLocation>
</comment>
<comment type="similarity">
    <text evidence="4">Belongs to the Mediator complex subunit 12 family.</text>
</comment>
<proteinExistence type="inferred from homology"/>
<gene>
    <name type="primary">med12</name>
    <name type="ORF">DDB_G0281277</name>
</gene>